<sequence>MSEKNLKQTVEERALALLEPIVAGEGLELVDLEFLREREGWVLRLFIDKPGGRVGLDECTQVSRAVDPSLDVEDFIPHEYNLEVSSPGVDRPLRKPTHFERVKGQQVKVKTFGPVGEPPRKNFTGTLTEVAGDGISVEVEGAGTFHILFKDIAKANLEFQF</sequence>
<comment type="function">
    <text evidence="1">Required for maturation of 30S ribosomal subunits.</text>
</comment>
<comment type="subcellular location">
    <subcellularLocation>
        <location evidence="1">Cytoplasm</location>
    </subcellularLocation>
</comment>
<comment type="similarity">
    <text evidence="1">Belongs to the RimP family.</text>
</comment>
<reference key="1">
    <citation type="journal article" date="2006" name="Proc. Natl. Acad. Sci. U.S.A.">
        <title>Evolution of sensory complexity recorded in a myxobacterial genome.</title>
        <authorList>
            <person name="Goldman B.S."/>
            <person name="Nierman W.C."/>
            <person name="Kaiser D."/>
            <person name="Slater S.C."/>
            <person name="Durkin A.S."/>
            <person name="Eisen J.A."/>
            <person name="Ronning C.M."/>
            <person name="Barbazuk W.B."/>
            <person name="Blanchard M."/>
            <person name="Field C."/>
            <person name="Halling C."/>
            <person name="Hinkle G."/>
            <person name="Iartchuk O."/>
            <person name="Kim H.S."/>
            <person name="Mackenzie C."/>
            <person name="Madupu R."/>
            <person name="Miller N."/>
            <person name="Shvartsbeyn A."/>
            <person name="Sullivan S.A."/>
            <person name="Vaudin M."/>
            <person name="Wiegand R."/>
            <person name="Kaplan H.B."/>
        </authorList>
    </citation>
    <scope>NUCLEOTIDE SEQUENCE [LARGE SCALE GENOMIC DNA]</scope>
    <source>
        <strain>DK1622</strain>
    </source>
</reference>
<accession>Q1DAM9</accession>
<evidence type="ECO:0000255" key="1">
    <source>
        <dbReference type="HAMAP-Rule" id="MF_01077"/>
    </source>
</evidence>
<name>RIMP_MYXXD</name>
<keyword id="KW-0963">Cytoplasm</keyword>
<keyword id="KW-1185">Reference proteome</keyword>
<keyword id="KW-0690">Ribosome biogenesis</keyword>
<feature type="chain" id="PRO_0000384715" description="Ribosome maturation factor RimP">
    <location>
        <begin position="1"/>
        <end position="161"/>
    </location>
</feature>
<protein>
    <recommendedName>
        <fullName evidence="1">Ribosome maturation factor RimP</fullName>
    </recommendedName>
</protein>
<dbReference type="EMBL" id="CP000113">
    <property type="protein sequence ID" value="ABF90125.1"/>
    <property type="molecule type" value="Genomic_DNA"/>
</dbReference>
<dbReference type="RefSeq" id="WP_011552149.1">
    <property type="nucleotide sequence ID" value="NC_008095.1"/>
</dbReference>
<dbReference type="SMR" id="Q1DAM9"/>
<dbReference type="STRING" id="246197.MXAN_2065"/>
<dbReference type="EnsemblBacteria" id="ABF90125">
    <property type="protein sequence ID" value="ABF90125"/>
    <property type="gene ID" value="MXAN_2065"/>
</dbReference>
<dbReference type="GeneID" id="41359474"/>
<dbReference type="KEGG" id="mxa:MXAN_2065"/>
<dbReference type="eggNOG" id="COG0779">
    <property type="taxonomic scope" value="Bacteria"/>
</dbReference>
<dbReference type="HOGENOM" id="CLU_070525_2_2_7"/>
<dbReference type="OrthoDB" id="9805006at2"/>
<dbReference type="Proteomes" id="UP000002402">
    <property type="component" value="Chromosome"/>
</dbReference>
<dbReference type="GO" id="GO:0005829">
    <property type="term" value="C:cytosol"/>
    <property type="evidence" value="ECO:0007669"/>
    <property type="project" value="TreeGrafter"/>
</dbReference>
<dbReference type="GO" id="GO:0000028">
    <property type="term" value="P:ribosomal small subunit assembly"/>
    <property type="evidence" value="ECO:0007669"/>
    <property type="project" value="TreeGrafter"/>
</dbReference>
<dbReference type="GO" id="GO:0006412">
    <property type="term" value="P:translation"/>
    <property type="evidence" value="ECO:0007669"/>
    <property type="project" value="TreeGrafter"/>
</dbReference>
<dbReference type="CDD" id="cd01734">
    <property type="entry name" value="YlxS_C"/>
    <property type="match status" value="1"/>
</dbReference>
<dbReference type="FunFam" id="3.30.300.70:FF:000001">
    <property type="entry name" value="Ribosome maturation factor RimP"/>
    <property type="match status" value="1"/>
</dbReference>
<dbReference type="Gene3D" id="2.30.30.180">
    <property type="entry name" value="Ribosome maturation factor RimP, C-terminal domain"/>
    <property type="match status" value="1"/>
</dbReference>
<dbReference type="Gene3D" id="3.30.300.70">
    <property type="entry name" value="RimP-like superfamily, N-terminal"/>
    <property type="match status" value="1"/>
</dbReference>
<dbReference type="HAMAP" id="MF_01077">
    <property type="entry name" value="RimP"/>
    <property type="match status" value="1"/>
</dbReference>
<dbReference type="InterPro" id="IPR003728">
    <property type="entry name" value="Ribosome_maturation_RimP"/>
</dbReference>
<dbReference type="InterPro" id="IPR028998">
    <property type="entry name" value="RimP_C"/>
</dbReference>
<dbReference type="InterPro" id="IPR036847">
    <property type="entry name" value="RimP_C_sf"/>
</dbReference>
<dbReference type="InterPro" id="IPR028989">
    <property type="entry name" value="RimP_N"/>
</dbReference>
<dbReference type="InterPro" id="IPR035956">
    <property type="entry name" value="RimP_N_sf"/>
</dbReference>
<dbReference type="PANTHER" id="PTHR33867">
    <property type="entry name" value="RIBOSOME MATURATION FACTOR RIMP"/>
    <property type="match status" value="1"/>
</dbReference>
<dbReference type="PANTHER" id="PTHR33867:SF1">
    <property type="entry name" value="RIBOSOME MATURATION FACTOR RIMP"/>
    <property type="match status" value="1"/>
</dbReference>
<dbReference type="Pfam" id="PF17384">
    <property type="entry name" value="DUF150_C"/>
    <property type="match status" value="1"/>
</dbReference>
<dbReference type="Pfam" id="PF02576">
    <property type="entry name" value="RimP_N"/>
    <property type="match status" value="1"/>
</dbReference>
<dbReference type="SUPFAM" id="SSF74942">
    <property type="entry name" value="YhbC-like, C-terminal domain"/>
    <property type="match status" value="1"/>
</dbReference>
<dbReference type="SUPFAM" id="SSF75420">
    <property type="entry name" value="YhbC-like, N-terminal domain"/>
    <property type="match status" value="1"/>
</dbReference>
<gene>
    <name evidence="1" type="primary">rimP</name>
    <name type="ordered locus">MXAN_2065</name>
</gene>
<organism>
    <name type="scientific">Myxococcus xanthus (strain DK1622)</name>
    <dbReference type="NCBI Taxonomy" id="246197"/>
    <lineage>
        <taxon>Bacteria</taxon>
        <taxon>Pseudomonadati</taxon>
        <taxon>Myxococcota</taxon>
        <taxon>Myxococcia</taxon>
        <taxon>Myxococcales</taxon>
        <taxon>Cystobacterineae</taxon>
        <taxon>Myxococcaceae</taxon>
        <taxon>Myxococcus</taxon>
    </lineage>
</organism>
<proteinExistence type="inferred from homology"/>